<protein>
    <recommendedName>
        <fullName evidence="1">Valine--tRNA ligase</fullName>
        <ecNumber evidence="1">6.1.1.9</ecNumber>
    </recommendedName>
    <alternativeName>
        <fullName evidence="1">Valyl-tRNA synthetase</fullName>
        <shortName evidence="1">ValRS</shortName>
    </alternativeName>
</protein>
<evidence type="ECO:0000255" key="1">
    <source>
        <dbReference type="HAMAP-Rule" id="MF_02004"/>
    </source>
</evidence>
<sequence>MEKTYNPQDIEQPLYEHWEKQGYFKPNGDESQESFCIMIPPPNVTGSLHMGHAFQQTIMDTMIRYQRMQGKNTLWQVGTDHAGIATQMVVERKIAAEEGKTRHDYGREAFIDKIWEWKAESGGTITRQMRRLGNSVDWERERFTMDEGLSNAVKEVFVRLYKEDLIYRGKRLVNWDPKLRTAISDLEVENRESKGSMWHIRYPLADGAKTADGKDYLVVATTRPETLLGDTGVAVNPEDPRYKDLIGKYVILPLVNRRIPIVGDEHADMEKGTGCVKITPAHDFNDYEVGKRHALPMINILTFDGDIRESAQVFDTKGNESDVYSSEIPAEFQKLERFAARKAVVAAVDALGLLEEIKPHDLTVPYGDRGGVVIEPMLTDQWYVRADVLAKPAVEAVENGDIQFVPKQYENMYFSWMRDIQDWCISRQLWWGHRIPAWYDEAGNVYVGRNEEEVRKENNLGADVALRQDEDVLDTWFSSALWTFSTLGWPENTDALRQFHPTSVMVSGFDIIFFWIARMIMMTMHFIKDENGKPQVPFHTVYMTGLIRDDEGQKMSKSKGNVIDPLDMVDGISLPELLEKRTGNMMQPQLADKIRKRTEKQFPNGIEPHGTDALRFTLAALASTGRDINWDMKRLEGYRNFCNKLWNASRFVLMNTEGQDCGFNGGEMTLSLADRWILAEFNQTIKAYREALDSFRFDIAAGILYEFTWNQFCDWYLELTKPVMNGGTEAELRGTRHTLVTVLEGLLRLAHPIIPFITETIWQRVKVLCGITADTIMLQPFPQYDASQVDEAALADTEWLKQAIVAVRNIRAEMNIAPGKPLELLLRGCSADAERRVNENRGFLQTLARLESITVLPADDKGPVSVTKIIDGAELLIPMAGLINKEDELARLAKEVAKIEGEISRIENKLANEGFVARAPEAVIAKEREKLEGYAEAKAKLIEQQAVIAAL</sequence>
<proteinExistence type="inferred from homology"/>
<keyword id="KW-0030">Aminoacyl-tRNA synthetase</keyword>
<keyword id="KW-0067">ATP-binding</keyword>
<keyword id="KW-0175">Coiled coil</keyword>
<keyword id="KW-0963">Cytoplasm</keyword>
<keyword id="KW-0436">Ligase</keyword>
<keyword id="KW-0547">Nucleotide-binding</keyword>
<keyword id="KW-0648">Protein biosynthesis</keyword>
<keyword id="KW-1185">Reference proteome</keyword>
<name>SYV_SHISS</name>
<organism>
    <name type="scientific">Shigella sonnei (strain Ss046)</name>
    <dbReference type="NCBI Taxonomy" id="300269"/>
    <lineage>
        <taxon>Bacteria</taxon>
        <taxon>Pseudomonadati</taxon>
        <taxon>Pseudomonadota</taxon>
        <taxon>Gammaproteobacteria</taxon>
        <taxon>Enterobacterales</taxon>
        <taxon>Enterobacteriaceae</taxon>
        <taxon>Shigella</taxon>
    </lineage>
</organism>
<reference key="1">
    <citation type="journal article" date="2005" name="Nucleic Acids Res.">
        <title>Genome dynamics and diversity of Shigella species, the etiologic agents of bacillary dysentery.</title>
        <authorList>
            <person name="Yang F."/>
            <person name="Yang J."/>
            <person name="Zhang X."/>
            <person name="Chen L."/>
            <person name="Jiang Y."/>
            <person name="Yan Y."/>
            <person name="Tang X."/>
            <person name="Wang J."/>
            <person name="Xiong Z."/>
            <person name="Dong J."/>
            <person name="Xue Y."/>
            <person name="Zhu Y."/>
            <person name="Xu X."/>
            <person name="Sun L."/>
            <person name="Chen S."/>
            <person name="Nie H."/>
            <person name="Peng J."/>
            <person name="Xu J."/>
            <person name="Wang Y."/>
            <person name="Yuan Z."/>
            <person name="Wen Y."/>
            <person name="Yao Z."/>
            <person name="Shen Y."/>
            <person name="Qiang B."/>
            <person name="Hou Y."/>
            <person name="Yu J."/>
            <person name="Jin Q."/>
        </authorList>
    </citation>
    <scope>NUCLEOTIDE SEQUENCE [LARGE SCALE GENOMIC DNA]</scope>
    <source>
        <strain>Ss046</strain>
    </source>
</reference>
<gene>
    <name evidence="1" type="primary">valS</name>
    <name type="ordered locus">SSON_4443</name>
</gene>
<accession>Q3YU91</accession>
<dbReference type="EC" id="6.1.1.9" evidence="1"/>
<dbReference type="EMBL" id="CP000038">
    <property type="protein sequence ID" value="AAZ90921.1"/>
    <property type="molecule type" value="Genomic_DNA"/>
</dbReference>
<dbReference type="RefSeq" id="WP_000416407.1">
    <property type="nucleotide sequence ID" value="NC_007384.1"/>
</dbReference>
<dbReference type="SMR" id="Q3YU91"/>
<dbReference type="GeneID" id="93777560"/>
<dbReference type="KEGG" id="ssn:SSON_4443"/>
<dbReference type="HOGENOM" id="CLU_001493_0_2_6"/>
<dbReference type="Proteomes" id="UP000002529">
    <property type="component" value="Chromosome"/>
</dbReference>
<dbReference type="GO" id="GO:0005829">
    <property type="term" value="C:cytosol"/>
    <property type="evidence" value="ECO:0007669"/>
    <property type="project" value="TreeGrafter"/>
</dbReference>
<dbReference type="GO" id="GO:0002161">
    <property type="term" value="F:aminoacyl-tRNA deacylase activity"/>
    <property type="evidence" value="ECO:0007669"/>
    <property type="project" value="InterPro"/>
</dbReference>
<dbReference type="GO" id="GO:0005524">
    <property type="term" value="F:ATP binding"/>
    <property type="evidence" value="ECO:0007669"/>
    <property type="project" value="UniProtKB-UniRule"/>
</dbReference>
<dbReference type="GO" id="GO:0004832">
    <property type="term" value="F:valine-tRNA ligase activity"/>
    <property type="evidence" value="ECO:0007669"/>
    <property type="project" value="UniProtKB-UniRule"/>
</dbReference>
<dbReference type="GO" id="GO:0006438">
    <property type="term" value="P:valyl-tRNA aminoacylation"/>
    <property type="evidence" value="ECO:0007669"/>
    <property type="project" value="UniProtKB-UniRule"/>
</dbReference>
<dbReference type="CDD" id="cd07962">
    <property type="entry name" value="Anticodon_Ia_Val"/>
    <property type="match status" value="1"/>
</dbReference>
<dbReference type="CDD" id="cd00817">
    <property type="entry name" value="ValRS_core"/>
    <property type="match status" value="1"/>
</dbReference>
<dbReference type="FunFam" id="1.10.287.380:FF:000001">
    <property type="entry name" value="Valine--tRNA ligase"/>
    <property type="match status" value="1"/>
</dbReference>
<dbReference type="FunFam" id="1.10.730.10:FF:000007">
    <property type="entry name" value="Valine--tRNA ligase"/>
    <property type="match status" value="1"/>
</dbReference>
<dbReference type="FunFam" id="3.40.50.620:FF:000032">
    <property type="entry name" value="Valine--tRNA ligase"/>
    <property type="match status" value="1"/>
</dbReference>
<dbReference type="FunFam" id="3.40.50.620:FF:000146">
    <property type="entry name" value="Valine--tRNA ligase"/>
    <property type="match status" value="1"/>
</dbReference>
<dbReference type="FunFam" id="3.90.740.10:FF:000021">
    <property type="entry name" value="Valine--tRNA ligase"/>
    <property type="match status" value="1"/>
</dbReference>
<dbReference type="Gene3D" id="3.40.50.620">
    <property type="entry name" value="HUPs"/>
    <property type="match status" value="2"/>
</dbReference>
<dbReference type="Gene3D" id="1.10.730.10">
    <property type="entry name" value="Isoleucyl-tRNA Synthetase, Domain 1"/>
    <property type="match status" value="1"/>
</dbReference>
<dbReference type="Gene3D" id="1.10.287.380">
    <property type="entry name" value="Valyl-tRNA synthetase, C-terminal domain"/>
    <property type="match status" value="1"/>
</dbReference>
<dbReference type="Gene3D" id="3.90.740.10">
    <property type="entry name" value="Valyl/Leucyl/Isoleucyl-tRNA synthetase, editing domain"/>
    <property type="match status" value="2"/>
</dbReference>
<dbReference type="HAMAP" id="MF_02004">
    <property type="entry name" value="Val_tRNA_synth_type1"/>
    <property type="match status" value="1"/>
</dbReference>
<dbReference type="InterPro" id="IPR001412">
    <property type="entry name" value="aa-tRNA-synth_I_CS"/>
</dbReference>
<dbReference type="InterPro" id="IPR002300">
    <property type="entry name" value="aa-tRNA-synth_Ia"/>
</dbReference>
<dbReference type="InterPro" id="IPR033705">
    <property type="entry name" value="Anticodon_Ia_Val"/>
</dbReference>
<dbReference type="InterPro" id="IPR013155">
    <property type="entry name" value="M/V/L/I-tRNA-synth_anticd-bd"/>
</dbReference>
<dbReference type="InterPro" id="IPR014729">
    <property type="entry name" value="Rossmann-like_a/b/a_fold"/>
</dbReference>
<dbReference type="InterPro" id="IPR010978">
    <property type="entry name" value="tRNA-bd_arm"/>
</dbReference>
<dbReference type="InterPro" id="IPR009080">
    <property type="entry name" value="tRNAsynth_Ia_anticodon-bd"/>
</dbReference>
<dbReference type="InterPro" id="IPR037118">
    <property type="entry name" value="Val-tRNA_synth_C_sf"/>
</dbReference>
<dbReference type="InterPro" id="IPR019499">
    <property type="entry name" value="Val-tRNA_synth_tRNA-bd"/>
</dbReference>
<dbReference type="InterPro" id="IPR009008">
    <property type="entry name" value="Val/Leu/Ile-tRNA-synth_edit"/>
</dbReference>
<dbReference type="InterPro" id="IPR002303">
    <property type="entry name" value="Valyl-tRNA_ligase"/>
</dbReference>
<dbReference type="NCBIfam" id="NF004349">
    <property type="entry name" value="PRK05729.1"/>
    <property type="match status" value="1"/>
</dbReference>
<dbReference type="NCBIfam" id="TIGR00422">
    <property type="entry name" value="valS"/>
    <property type="match status" value="1"/>
</dbReference>
<dbReference type="PANTHER" id="PTHR11946:SF93">
    <property type="entry name" value="VALINE--TRNA LIGASE, CHLOROPLASTIC_MITOCHONDRIAL 2"/>
    <property type="match status" value="1"/>
</dbReference>
<dbReference type="PANTHER" id="PTHR11946">
    <property type="entry name" value="VALYL-TRNA SYNTHETASES"/>
    <property type="match status" value="1"/>
</dbReference>
<dbReference type="Pfam" id="PF08264">
    <property type="entry name" value="Anticodon_1"/>
    <property type="match status" value="1"/>
</dbReference>
<dbReference type="Pfam" id="PF00133">
    <property type="entry name" value="tRNA-synt_1"/>
    <property type="match status" value="1"/>
</dbReference>
<dbReference type="Pfam" id="PF10458">
    <property type="entry name" value="Val_tRNA-synt_C"/>
    <property type="match status" value="1"/>
</dbReference>
<dbReference type="PRINTS" id="PR00986">
    <property type="entry name" value="TRNASYNTHVAL"/>
</dbReference>
<dbReference type="SUPFAM" id="SSF47323">
    <property type="entry name" value="Anticodon-binding domain of a subclass of class I aminoacyl-tRNA synthetases"/>
    <property type="match status" value="1"/>
</dbReference>
<dbReference type="SUPFAM" id="SSF52374">
    <property type="entry name" value="Nucleotidylyl transferase"/>
    <property type="match status" value="1"/>
</dbReference>
<dbReference type="SUPFAM" id="SSF46589">
    <property type="entry name" value="tRNA-binding arm"/>
    <property type="match status" value="1"/>
</dbReference>
<dbReference type="SUPFAM" id="SSF50677">
    <property type="entry name" value="ValRS/IleRS/LeuRS editing domain"/>
    <property type="match status" value="1"/>
</dbReference>
<dbReference type="PROSITE" id="PS00178">
    <property type="entry name" value="AA_TRNA_LIGASE_I"/>
    <property type="match status" value="1"/>
</dbReference>
<feature type="chain" id="PRO_0000224557" description="Valine--tRNA ligase">
    <location>
        <begin position="1"/>
        <end position="951"/>
    </location>
</feature>
<feature type="coiled-coil region" evidence="1">
    <location>
        <begin position="880"/>
        <end position="944"/>
    </location>
</feature>
<feature type="short sequence motif" description="'HIGH' region">
    <location>
        <begin position="42"/>
        <end position="52"/>
    </location>
</feature>
<feature type="short sequence motif" description="'KMSKS' region">
    <location>
        <begin position="554"/>
        <end position="558"/>
    </location>
</feature>
<feature type="binding site" evidence="1">
    <location>
        <position position="557"/>
    </location>
    <ligand>
        <name>ATP</name>
        <dbReference type="ChEBI" id="CHEBI:30616"/>
    </ligand>
</feature>
<comment type="function">
    <text evidence="1">Catalyzes the attachment of valine to tRNA(Val). As ValRS can inadvertently accommodate and process structurally similar amino acids such as threonine, to avoid such errors, it has a 'posttransfer' editing activity that hydrolyzes mischarged Thr-tRNA(Val) in a tRNA-dependent manner.</text>
</comment>
<comment type="catalytic activity">
    <reaction evidence="1">
        <text>tRNA(Val) + L-valine + ATP = L-valyl-tRNA(Val) + AMP + diphosphate</text>
        <dbReference type="Rhea" id="RHEA:10704"/>
        <dbReference type="Rhea" id="RHEA-COMP:9672"/>
        <dbReference type="Rhea" id="RHEA-COMP:9708"/>
        <dbReference type="ChEBI" id="CHEBI:30616"/>
        <dbReference type="ChEBI" id="CHEBI:33019"/>
        <dbReference type="ChEBI" id="CHEBI:57762"/>
        <dbReference type="ChEBI" id="CHEBI:78442"/>
        <dbReference type="ChEBI" id="CHEBI:78537"/>
        <dbReference type="ChEBI" id="CHEBI:456215"/>
        <dbReference type="EC" id="6.1.1.9"/>
    </reaction>
</comment>
<comment type="subunit">
    <text evidence="1">Monomer.</text>
</comment>
<comment type="subcellular location">
    <subcellularLocation>
        <location evidence="1">Cytoplasm</location>
    </subcellularLocation>
</comment>
<comment type="domain">
    <text evidence="1">ValRS has two distinct active sites: one for aminoacylation and one for editing. The misactivated threonine is translocated from the active site to the editing site.</text>
</comment>
<comment type="domain">
    <text evidence="1">The C-terminal coiled-coil domain is crucial for aminoacylation activity.</text>
</comment>
<comment type="similarity">
    <text evidence="1">Belongs to the class-I aminoacyl-tRNA synthetase family. ValS type 1 subfamily.</text>
</comment>